<comment type="function">
    <text evidence="1">Might regulate the synthesis and function of enzymes involved in later enzymatic steps of Krebs cycle.</text>
</comment>
<comment type="catalytic activity">
    <reaction evidence="2">
        <text>oxaloacetate + acetyl-CoA + H2O = citrate + CoA + H(+)</text>
        <dbReference type="Rhea" id="RHEA:16845"/>
        <dbReference type="ChEBI" id="CHEBI:15377"/>
        <dbReference type="ChEBI" id="CHEBI:15378"/>
        <dbReference type="ChEBI" id="CHEBI:16452"/>
        <dbReference type="ChEBI" id="CHEBI:16947"/>
        <dbReference type="ChEBI" id="CHEBI:57287"/>
        <dbReference type="ChEBI" id="CHEBI:57288"/>
        <dbReference type="EC" id="2.3.3.16"/>
    </reaction>
</comment>
<comment type="biophysicochemical properties">
    <kinetics>
        <KM evidence="2">125 uM for acetyl-CoA</KM>
        <KM evidence="2">26 uM for oxaloacetate</KM>
        <Vmax evidence="2">36.0 umol/min/mg enzyme</Vmax>
    </kinetics>
</comment>
<comment type="pathway">
    <text>Carbohydrate metabolism; tricarboxylic acid cycle; isocitrate from oxaloacetate: step 1/2.</text>
</comment>
<comment type="subunit">
    <text evidence="1">Homodimer.</text>
</comment>
<comment type="miscellaneous">
    <text evidence="4">When expressed in E.coli, CitZ is produced in a soluble but inactive form that can be reactivated by incubating with 2 M KCl (PubMed:10397837). Citrate synthase is found in nearly all cells capable of oxidative metabolism.</text>
</comment>
<comment type="similarity">
    <text evidence="3">Belongs to the citrate synthase family.</text>
</comment>
<sequence>MSGELKRGLEGVLVAESKLSFIDGDAGQLVYCGYDIEDLARDASYEEVLYLLWHGALPTGEELDAFSDELAAHRDLDDGVLDVARELAEQDESPMAALRTLVSAMSAYDESADFEDVTDREVNLEKAKRITAKMPSVLAAYARFRRGDDYVEPDESLNHAANFLYMLNGEEPNEVLAETFDMALVLHADHGLNASTFSAMVTSSTLSDLYSAVTSAIGTLSGSLHGGANANVMRMLKDVDDSDMDPTEWVKDALDRGERVAGFGHRVYNVKDPRAKILGAKSEALGEAAGDMKWYEMSVAIEEYIGEEKGLAPNVDFYSASTYYQMGIPIDLYTPIFAVSRAGGWIAHVLEQYEDNRLIRPRARYTGEKDLDFTPVDER</sequence>
<keyword id="KW-0012">Acyltransferase</keyword>
<keyword id="KW-0021">Allosteric enzyme</keyword>
<keyword id="KW-0903">Direct protein sequencing</keyword>
<keyword id="KW-1185">Reference proteome</keyword>
<keyword id="KW-0808">Transferase</keyword>
<keyword id="KW-0816">Tricarboxylic acid cycle</keyword>
<name>CISY_HALVD</name>
<dbReference type="EC" id="2.3.3.16"/>
<dbReference type="EMBL" id="AJ002075">
    <property type="protein sequence ID" value="CAA05174.1"/>
    <property type="molecule type" value="Genomic_DNA"/>
</dbReference>
<dbReference type="EMBL" id="CP001956">
    <property type="protein sequence ID" value="ADE03756.1"/>
    <property type="molecule type" value="Genomic_DNA"/>
</dbReference>
<dbReference type="EMBL" id="AOHU01000100">
    <property type="protein sequence ID" value="ELY25937.1"/>
    <property type="molecule type" value="Genomic_DNA"/>
</dbReference>
<dbReference type="PIR" id="T44615">
    <property type="entry name" value="T44615"/>
</dbReference>
<dbReference type="RefSeq" id="WP_004044456.1">
    <property type="nucleotide sequence ID" value="NC_013967.1"/>
</dbReference>
<dbReference type="SMR" id="D4GS06"/>
<dbReference type="STRING" id="309800.HVO_0466"/>
<dbReference type="PaxDb" id="309800-C498_16349"/>
<dbReference type="EnsemblBacteria" id="ADE03756">
    <property type="protein sequence ID" value="ADE03756"/>
    <property type="gene ID" value="HVO_0466"/>
</dbReference>
<dbReference type="GeneID" id="8925804"/>
<dbReference type="KEGG" id="hvo:HVO_0466"/>
<dbReference type="PATRIC" id="fig|309800.29.peg.3168"/>
<dbReference type="eggNOG" id="arCOG04237">
    <property type="taxonomic scope" value="Archaea"/>
</dbReference>
<dbReference type="HOGENOM" id="CLU_025068_2_1_2"/>
<dbReference type="OrthoDB" id="21302at2157"/>
<dbReference type="BRENDA" id="2.3.3.16">
    <property type="organism ID" value="2561"/>
</dbReference>
<dbReference type="SABIO-RK" id="D4GS06"/>
<dbReference type="UniPathway" id="UPA00223">
    <property type="reaction ID" value="UER00717"/>
</dbReference>
<dbReference type="Proteomes" id="UP000008243">
    <property type="component" value="Chromosome"/>
</dbReference>
<dbReference type="Proteomes" id="UP000011532">
    <property type="component" value="Unassembled WGS sequence"/>
</dbReference>
<dbReference type="GO" id="GO:0005829">
    <property type="term" value="C:cytosol"/>
    <property type="evidence" value="ECO:0007669"/>
    <property type="project" value="TreeGrafter"/>
</dbReference>
<dbReference type="GO" id="GO:0004108">
    <property type="term" value="F:citrate (Si)-synthase activity"/>
    <property type="evidence" value="ECO:0007669"/>
    <property type="project" value="TreeGrafter"/>
</dbReference>
<dbReference type="GO" id="GO:0005975">
    <property type="term" value="P:carbohydrate metabolic process"/>
    <property type="evidence" value="ECO:0007669"/>
    <property type="project" value="TreeGrafter"/>
</dbReference>
<dbReference type="GO" id="GO:0006099">
    <property type="term" value="P:tricarboxylic acid cycle"/>
    <property type="evidence" value="ECO:0007669"/>
    <property type="project" value="UniProtKB-UniPathway"/>
</dbReference>
<dbReference type="Gene3D" id="1.10.580.10">
    <property type="entry name" value="Citrate Synthase, domain 1"/>
    <property type="match status" value="1"/>
</dbReference>
<dbReference type="Gene3D" id="1.10.230.10">
    <property type="entry name" value="Cytochrome P450-Terp, domain 2"/>
    <property type="match status" value="1"/>
</dbReference>
<dbReference type="InterPro" id="IPR011278">
    <property type="entry name" value="2-MeCitrate/Citrate_synth_II"/>
</dbReference>
<dbReference type="InterPro" id="IPR054872">
    <property type="entry name" value="Cit_synth_Halo_CitZ"/>
</dbReference>
<dbReference type="InterPro" id="IPR016142">
    <property type="entry name" value="Citrate_synth-like_lrg_a-sub"/>
</dbReference>
<dbReference type="InterPro" id="IPR016143">
    <property type="entry name" value="Citrate_synth-like_sm_a-sub"/>
</dbReference>
<dbReference type="InterPro" id="IPR002020">
    <property type="entry name" value="Citrate_synthase"/>
</dbReference>
<dbReference type="InterPro" id="IPR024176">
    <property type="entry name" value="Citrate_synthase_bac-typ"/>
</dbReference>
<dbReference type="InterPro" id="IPR036969">
    <property type="entry name" value="Citrate_synthase_sf"/>
</dbReference>
<dbReference type="NCBIfam" id="NF041301">
    <property type="entry name" value="Cit_synth_Halo_CitZ"/>
    <property type="match status" value="1"/>
</dbReference>
<dbReference type="NCBIfam" id="TIGR01800">
    <property type="entry name" value="cit_synth_II"/>
    <property type="match status" value="1"/>
</dbReference>
<dbReference type="PANTHER" id="PTHR11739">
    <property type="entry name" value="CITRATE SYNTHASE"/>
    <property type="match status" value="1"/>
</dbReference>
<dbReference type="PANTHER" id="PTHR11739:SF4">
    <property type="entry name" value="CITRATE SYNTHASE, PEROXISOMAL"/>
    <property type="match status" value="1"/>
</dbReference>
<dbReference type="Pfam" id="PF00285">
    <property type="entry name" value="Citrate_synt"/>
    <property type="match status" value="1"/>
</dbReference>
<dbReference type="PIRSF" id="PIRSF001369">
    <property type="entry name" value="Citrate_synth"/>
    <property type="match status" value="1"/>
</dbReference>
<dbReference type="PRINTS" id="PR00143">
    <property type="entry name" value="CITRTSNTHASE"/>
</dbReference>
<dbReference type="SUPFAM" id="SSF48256">
    <property type="entry name" value="Citrate synthase"/>
    <property type="match status" value="1"/>
</dbReference>
<gene>
    <name type="primary">citZ</name>
    <name type="ordered locus">HVO_0466</name>
    <name type="ORF">C498_16349</name>
</gene>
<feature type="initiator methionine" description="Removed" evidence="5">
    <location>
        <position position="1"/>
    </location>
</feature>
<feature type="chain" id="PRO_0000428843" description="Citrate synthase">
    <location>
        <begin position="2"/>
        <end position="379"/>
    </location>
</feature>
<feature type="active site" evidence="1">
    <location>
        <position position="225"/>
    </location>
</feature>
<feature type="active site" evidence="1">
    <location>
        <position position="265"/>
    </location>
</feature>
<feature type="active site" evidence="1">
    <location>
        <position position="316"/>
    </location>
</feature>
<feature type="sequence conflict" description="In Ref. 1; CAA05174." evidence="3" ref="1">
    <original>G</original>
    <variation>V</variation>
    <location>
        <position position="264"/>
    </location>
</feature>
<organism>
    <name type="scientific">Haloferax volcanii (strain ATCC 29605 / DSM 3757 / JCM 8879 / NBRC 14742 / NCIMB 2012 / VKM B-1768 / DS2)</name>
    <name type="common">Halobacterium volcanii</name>
    <dbReference type="NCBI Taxonomy" id="309800"/>
    <lineage>
        <taxon>Archaea</taxon>
        <taxon>Methanobacteriati</taxon>
        <taxon>Methanobacteriota</taxon>
        <taxon>Stenosarchaea group</taxon>
        <taxon>Halobacteria</taxon>
        <taxon>Halobacteriales</taxon>
        <taxon>Haloferacaceae</taxon>
        <taxon>Haloferax</taxon>
    </lineage>
</organism>
<accession>D4GS06</accession>
<accession>O32705</accession>
<evidence type="ECO:0000250" key="1"/>
<evidence type="ECO:0000269" key="2">
    <source>
    </source>
</evidence>
<evidence type="ECO:0000305" key="3"/>
<evidence type="ECO:0000305" key="4">
    <source>
    </source>
</evidence>
<evidence type="ECO:0000305" key="5">
    <source>
    </source>
</evidence>
<protein>
    <recommendedName>
        <fullName>Citrate synthase</fullName>
        <ecNumber>2.3.3.16</ecNumber>
    </recommendedName>
</protein>
<proteinExistence type="evidence at protein level"/>
<reference key="1">
    <citation type="journal article" date="1999" name="Biotechnol. Bioeng.">
        <title>Expression, reactivation, and purification of enzymes from Haloferax volcanii in Escherichia coli.</title>
        <authorList>
            <person name="Connaris H."/>
            <person name="Chaudhuri J.B."/>
            <person name="Danson M.J."/>
            <person name="Hough D.W."/>
        </authorList>
    </citation>
    <scope>NUCLEOTIDE SEQUENCE [GENOMIC DNA]</scope>
    <scope>CATALYTIC ACTIVITY</scope>
    <scope>BIOPHYSICOCHEMICAL PROPERTIES</scope>
    <source>
        <strain>DS2 / DSM 5716 / WFD11</strain>
    </source>
</reference>
<reference key="2">
    <citation type="journal article" date="2010" name="PLoS ONE">
        <title>The complete genome sequence of Haloferax volcanii DS2, a model archaeon.</title>
        <authorList>
            <person name="Hartman A.L."/>
            <person name="Norais C."/>
            <person name="Badger J.H."/>
            <person name="Delmas S."/>
            <person name="Haldenby S."/>
            <person name="Madupu R."/>
            <person name="Robinson J."/>
            <person name="Khouri H."/>
            <person name="Ren Q."/>
            <person name="Lowe T.M."/>
            <person name="Maupin-Furlow J."/>
            <person name="Pohlschroder M."/>
            <person name="Daniels C."/>
            <person name="Pfeiffer F."/>
            <person name="Allers T."/>
            <person name="Eisen J.A."/>
        </authorList>
    </citation>
    <scope>NUCLEOTIDE SEQUENCE [LARGE SCALE GENOMIC DNA]</scope>
    <source>
        <strain>ATCC 29605 / DSM 3757 / JCM 8879 / NBRC 14742 / NCIMB 2012 / VKM B-1768 / DS2</strain>
    </source>
</reference>
<reference key="3">
    <citation type="journal article" date="2014" name="PLoS Genet.">
        <title>Phylogenetically driven sequencing of extremely halophilic archaea reveals strategies for static and dynamic osmo-response.</title>
        <authorList>
            <person name="Becker E.A."/>
            <person name="Seitzer P.M."/>
            <person name="Tritt A."/>
            <person name="Larsen D."/>
            <person name="Krusor M."/>
            <person name="Yao A.I."/>
            <person name="Wu D."/>
            <person name="Madern D."/>
            <person name="Eisen J.A."/>
            <person name="Darling A.E."/>
            <person name="Facciotti M.T."/>
        </authorList>
    </citation>
    <scope>NUCLEOTIDE SEQUENCE [LARGE SCALE GENOMIC DNA]</scope>
    <source>
        <strain>ATCC 29605 / DSM 3757 / JCM 8879 / NBRC 14742 / NCIMB 2012 / VKM B-1768 / DS2</strain>
    </source>
</reference>
<reference key="4">
    <citation type="journal article" date="1992" name="Biochem. Soc. Trans.">
        <title>Citrate synthase from Haloferax volcanii: enzyme purification and gene cloning.</title>
        <authorList>
            <person name="James K.D."/>
            <person name="Bonete M.J."/>
            <person name="Byrom D."/>
            <person name="Danson M.J."/>
            <person name="Hough D.W."/>
        </authorList>
    </citation>
    <scope>PROTEIN SEQUENCE OF 2-39</scope>
</reference>